<proteinExistence type="evidence at protein level"/>
<sequence>MSLFKIRMPETVAEGTRLALRAFSLVVAVDEHGGIGDGRSIPWNVPEDMKFFRDLTTKLRGKNVKPSPAKRNAVVMGRKTWDSIPPKFRPLPGRLNVVLSSTLTTQHLLDGLPDEEKRNLHADSIVAVNGGLEQALRLLASPNYTPSIETVYCIGGGSVYAEALRPPCVHLLQAIYRTTIRASESSCSVFFRVPESGTEAAAGIEWQRETISEELTSANGNETKYYFEKLIPRNREEEQYLSLVDRIIREGNVKHDRTGVGTLSIFGAQMRFSLRNNRLPLLTTKRVFWRGVCEELLWFLRGETYAKKLSDKGVHIWDDNGSRAFLDSRGLTEYEEMDLGPVYGFQWRHFGAAYTHHDANYDGQGVDQIKAIVETLKTNPDDRRMLFTAWNPSALPRMALPPCHLLAQFYVSNGELSCMLYQRSCDMGLGVPFNIASYALLTILIAKATGLRPGELVHTLGDAHVYSNHVEPCNEQLKRVPRAFPYLVFRREREFLEDYEEGDMEVIDYAPYPPISMKMAV</sequence>
<feature type="chain" id="PRO_0000186354" description="Bifunctional dihydrofolate reductase-thymidylate synthase">
    <location>
        <begin position="1"/>
        <end position="521"/>
    </location>
</feature>
<feature type="domain" description="DHFR">
    <location>
        <begin position="22"/>
        <end position="232"/>
    </location>
</feature>
<feature type="region of interest" description="Thymidylate synthase">
    <location>
        <begin position="237"/>
        <end position="521"/>
    </location>
</feature>
<feature type="active site" evidence="1">
    <location>
        <position position="403"/>
    </location>
</feature>
<feature type="binding site">
    <location>
        <position position="26"/>
    </location>
    <ligand>
        <name>substrate</name>
    </ligand>
</feature>
<feature type="binding site">
    <location>
        <position position="28"/>
    </location>
    <ligand>
        <name>NADP(+)</name>
        <dbReference type="ChEBI" id="CHEBI:58349"/>
    </ligand>
</feature>
<feature type="binding site">
    <location>
        <begin position="34"/>
        <end position="40"/>
    </location>
    <ligand>
        <name>NADP(+)</name>
        <dbReference type="ChEBI" id="CHEBI:58349"/>
    </ligand>
</feature>
<feature type="binding site">
    <location>
        <position position="48"/>
    </location>
    <ligand>
        <name>substrate</name>
    </ligand>
</feature>
<feature type="binding site">
    <location>
        <begin position="78"/>
        <end position="80"/>
    </location>
    <ligand>
        <name>NADP(+)</name>
        <dbReference type="ChEBI" id="CHEBI:58349"/>
    </ligand>
</feature>
<feature type="binding site">
    <location>
        <begin position="99"/>
        <end position="102"/>
    </location>
    <ligand>
        <name>NADP(+)</name>
        <dbReference type="ChEBI" id="CHEBI:58349"/>
    </ligand>
</feature>
<feature type="binding site">
    <location>
        <position position="154"/>
    </location>
    <ligand>
        <name>substrate</name>
    </ligand>
</feature>
<feature type="binding site">
    <location>
        <begin position="155"/>
        <end position="162"/>
    </location>
    <ligand>
        <name>NADP(+)</name>
        <dbReference type="ChEBI" id="CHEBI:58349"/>
    </ligand>
</feature>
<feature type="binding site">
    <location>
        <position position="160"/>
    </location>
    <ligand>
        <name>substrate</name>
    </ligand>
</feature>
<feature type="binding site">
    <location>
        <position position="178"/>
    </location>
    <ligand>
        <name>substrate</name>
    </ligand>
</feature>
<feature type="binding site">
    <location>
        <position position="257"/>
    </location>
    <ligand>
        <name>dUMP</name>
        <dbReference type="ChEBI" id="CHEBI:246422"/>
    </ligand>
</feature>
<feature type="binding site">
    <location>
        <position position="404"/>
    </location>
    <ligand>
        <name>dUMP</name>
        <dbReference type="ChEBI" id="CHEBI:246422"/>
    </ligand>
</feature>
<feature type="binding site">
    <location>
        <begin position="422"/>
        <end position="426"/>
    </location>
    <ligand>
        <name>dUMP</name>
        <dbReference type="ChEBI" id="CHEBI:246422"/>
    </ligand>
</feature>
<feature type="binding site">
    <location>
        <position position="434"/>
    </location>
    <ligand>
        <name>dUMP</name>
        <dbReference type="ChEBI" id="CHEBI:246422"/>
    </ligand>
</feature>
<feature type="binding site">
    <location>
        <begin position="464"/>
        <end position="466"/>
    </location>
    <ligand>
        <name>dUMP</name>
        <dbReference type="ChEBI" id="CHEBI:246422"/>
    </ligand>
</feature>
<feature type="helix" evidence="5">
    <location>
        <begin position="2"/>
        <end position="4"/>
    </location>
</feature>
<feature type="turn" evidence="5">
    <location>
        <begin position="10"/>
        <end position="13"/>
    </location>
</feature>
<feature type="helix" evidence="5">
    <location>
        <begin position="14"/>
        <end position="16"/>
    </location>
</feature>
<feature type="strand" evidence="5">
    <location>
        <begin position="23"/>
        <end position="30"/>
    </location>
</feature>
<feature type="strand" evidence="5">
    <location>
        <begin position="33"/>
        <end position="39"/>
    </location>
</feature>
<feature type="helix" evidence="5">
    <location>
        <begin position="46"/>
        <end position="57"/>
    </location>
</feature>
<feature type="strand" evidence="5">
    <location>
        <begin position="60"/>
        <end position="63"/>
    </location>
</feature>
<feature type="strand" evidence="5">
    <location>
        <begin position="70"/>
        <end position="77"/>
    </location>
</feature>
<feature type="helix" evidence="5">
    <location>
        <begin position="78"/>
        <end position="82"/>
    </location>
</feature>
<feature type="helix" evidence="5">
    <location>
        <begin position="86"/>
        <end position="88"/>
    </location>
</feature>
<feature type="strand" evidence="5">
    <location>
        <begin position="94"/>
        <end position="99"/>
    </location>
</feature>
<feature type="helix" evidence="5">
    <location>
        <begin position="105"/>
        <end position="110"/>
    </location>
</feature>
<feature type="strand" evidence="5">
    <location>
        <begin position="112"/>
        <end position="114"/>
    </location>
</feature>
<feature type="helix" evidence="5">
    <location>
        <begin position="115"/>
        <end position="121"/>
    </location>
</feature>
<feature type="helix" evidence="5">
    <location>
        <begin position="122"/>
        <end position="124"/>
    </location>
</feature>
<feature type="strand" evidence="5">
    <location>
        <begin position="125"/>
        <end position="130"/>
    </location>
</feature>
<feature type="helix" evidence="5">
    <location>
        <begin position="132"/>
        <end position="139"/>
    </location>
</feature>
<feature type="turn" evidence="5">
    <location>
        <begin position="142"/>
        <end position="147"/>
    </location>
</feature>
<feature type="strand" evidence="5">
    <location>
        <begin position="148"/>
        <end position="153"/>
    </location>
</feature>
<feature type="helix" evidence="5">
    <location>
        <begin position="157"/>
        <end position="163"/>
    </location>
</feature>
<feature type="helix" evidence="5">
    <location>
        <begin position="168"/>
        <end position="171"/>
    </location>
</feature>
<feature type="strand" evidence="5">
    <location>
        <begin position="172"/>
        <end position="180"/>
    </location>
</feature>
<feature type="strand" evidence="5">
    <location>
        <begin position="188"/>
        <end position="190"/>
    </location>
</feature>
<feature type="helix" evidence="5">
    <location>
        <begin position="199"/>
        <end position="201"/>
    </location>
</feature>
<feature type="strand" evidence="5">
    <location>
        <begin position="206"/>
        <end position="211"/>
    </location>
</feature>
<feature type="strand" evidence="5">
    <location>
        <begin position="218"/>
        <end position="221"/>
    </location>
</feature>
<feature type="strand" evidence="5">
    <location>
        <begin position="224"/>
        <end position="232"/>
    </location>
</feature>
<feature type="helix" evidence="5">
    <location>
        <begin position="235"/>
        <end position="250"/>
    </location>
</feature>
<feature type="strand" evidence="5">
    <location>
        <begin position="252"/>
        <end position="255"/>
    </location>
</feature>
<feature type="strand" evidence="5">
    <location>
        <begin position="261"/>
        <end position="273"/>
    </location>
</feature>
<feature type="helix" evidence="5">
    <location>
        <begin position="275"/>
        <end position="277"/>
    </location>
</feature>
<feature type="strand" evidence="5">
    <location>
        <begin position="283"/>
        <end position="285"/>
    </location>
</feature>
<feature type="helix" evidence="5">
    <location>
        <begin position="289"/>
        <end position="300"/>
    </location>
</feature>
<feature type="helix" evidence="5">
    <location>
        <begin position="307"/>
        <end position="310"/>
    </location>
</feature>
<feature type="turn" evidence="5">
    <location>
        <begin position="311"/>
        <end position="313"/>
    </location>
</feature>
<feature type="turn" evidence="5">
    <location>
        <begin position="319"/>
        <end position="321"/>
    </location>
</feature>
<feature type="helix" evidence="5">
    <location>
        <begin position="323"/>
        <end position="328"/>
    </location>
</feature>
<feature type="helix" evidence="5">
    <location>
        <begin position="343"/>
        <end position="349"/>
    </location>
</feature>
<feature type="strand" evidence="4">
    <location>
        <begin position="357"/>
        <end position="359"/>
    </location>
</feature>
<feature type="helix" evidence="5">
    <location>
        <begin position="368"/>
        <end position="378"/>
    </location>
</feature>
<feature type="strand" evidence="5">
    <location>
        <begin position="386"/>
        <end position="388"/>
    </location>
</feature>
<feature type="turn" evidence="5">
    <location>
        <begin position="392"/>
        <end position="394"/>
    </location>
</feature>
<feature type="helix" evidence="5">
    <location>
        <begin position="395"/>
        <end position="397"/>
    </location>
</feature>
<feature type="strand" evidence="5">
    <location>
        <begin position="398"/>
        <end position="400"/>
    </location>
</feature>
<feature type="strand" evidence="5">
    <location>
        <begin position="403"/>
        <end position="412"/>
    </location>
</feature>
<feature type="strand" evidence="5">
    <location>
        <begin position="415"/>
        <end position="426"/>
    </location>
</feature>
<feature type="turn" evidence="5">
    <location>
        <begin position="427"/>
        <end position="429"/>
    </location>
</feature>
<feature type="helix" evidence="5">
    <location>
        <begin position="430"/>
        <end position="448"/>
    </location>
</feature>
<feature type="strand" evidence="5">
    <location>
        <begin position="452"/>
        <end position="466"/>
    </location>
</feature>
<feature type="helix" evidence="5">
    <location>
        <begin position="467"/>
        <end position="469"/>
    </location>
</feature>
<feature type="helix" evidence="5">
    <location>
        <begin position="470"/>
        <end position="476"/>
    </location>
</feature>
<feature type="strand" evidence="5">
    <location>
        <begin position="486"/>
        <end position="490"/>
    </location>
</feature>
<feature type="helix" evidence="5">
    <location>
        <begin position="496"/>
        <end position="498"/>
    </location>
</feature>
<feature type="helix" evidence="5">
    <location>
        <begin position="501"/>
        <end position="503"/>
    </location>
</feature>
<feature type="strand" evidence="5">
    <location>
        <begin position="504"/>
        <end position="508"/>
    </location>
</feature>
<evidence type="ECO:0000250" key="1"/>
<evidence type="ECO:0000269" key="2">
    <source>
    </source>
</evidence>
<evidence type="ECO:0000305" key="3"/>
<evidence type="ECO:0007829" key="4">
    <source>
        <dbReference type="PDB" id="3CL9"/>
    </source>
</evidence>
<evidence type="ECO:0007829" key="5">
    <source>
        <dbReference type="PDB" id="3IRM"/>
    </source>
</evidence>
<accession>Q27793</accession>
<name>DRTS_TRYCR</name>
<organism>
    <name type="scientific">Trypanosoma cruzi</name>
    <dbReference type="NCBI Taxonomy" id="5693"/>
    <lineage>
        <taxon>Eukaryota</taxon>
        <taxon>Discoba</taxon>
        <taxon>Euglenozoa</taxon>
        <taxon>Kinetoplastea</taxon>
        <taxon>Metakinetoplastina</taxon>
        <taxon>Trypanosomatida</taxon>
        <taxon>Trypanosomatidae</taxon>
        <taxon>Trypanosoma</taxon>
        <taxon>Schizotrypanum</taxon>
    </lineage>
</organism>
<keyword id="KW-0002">3D-structure</keyword>
<keyword id="KW-0489">Methyltransferase</keyword>
<keyword id="KW-0511">Multifunctional enzyme</keyword>
<keyword id="KW-0521">NADP</keyword>
<keyword id="KW-0545">Nucleotide biosynthesis</keyword>
<keyword id="KW-0554">One-carbon metabolism</keyword>
<keyword id="KW-0560">Oxidoreductase</keyword>
<keyword id="KW-0808">Transferase</keyword>
<comment type="function">
    <text>Bifunctional enzyme. Involved in de novo dTMP biosynthesis. Key enzyme in folate metabolism. Catalyzes an essential reaction for de novo glycine and purine synthesis, DNA precursor synthesis, and for the conversion of dUMP to dTMP.</text>
</comment>
<comment type="catalytic activity">
    <reaction>
        <text>(6S)-5,6,7,8-tetrahydrofolate + NADP(+) = 7,8-dihydrofolate + NADPH + H(+)</text>
        <dbReference type="Rhea" id="RHEA:15009"/>
        <dbReference type="ChEBI" id="CHEBI:15378"/>
        <dbReference type="ChEBI" id="CHEBI:57451"/>
        <dbReference type="ChEBI" id="CHEBI:57453"/>
        <dbReference type="ChEBI" id="CHEBI:57783"/>
        <dbReference type="ChEBI" id="CHEBI:58349"/>
        <dbReference type="EC" id="1.5.1.3"/>
    </reaction>
</comment>
<comment type="catalytic activity">
    <reaction>
        <text>dUMP + (6R)-5,10-methylene-5,6,7,8-tetrahydrofolate = 7,8-dihydrofolate + dTMP</text>
        <dbReference type="Rhea" id="RHEA:12104"/>
        <dbReference type="ChEBI" id="CHEBI:15636"/>
        <dbReference type="ChEBI" id="CHEBI:57451"/>
        <dbReference type="ChEBI" id="CHEBI:63528"/>
        <dbReference type="ChEBI" id="CHEBI:246422"/>
        <dbReference type="EC" id="2.1.1.45"/>
    </reaction>
</comment>
<comment type="pathway">
    <text>Cofactor biosynthesis; tetrahydrofolate biosynthesis; 5,6,7,8-tetrahydrofolate from 7,8-dihydrofolate: step 1/1.</text>
</comment>
<comment type="subunit">
    <text evidence="2">Homodimer.</text>
</comment>
<comment type="similarity">
    <text evidence="3">In the N-terminal section; belongs to the dihydrofolate reductase family.</text>
</comment>
<comment type="similarity">
    <text evidence="3">In the C-terminal section; belongs to the thymidylate synthase family.</text>
</comment>
<protein>
    <recommendedName>
        <fullName>Bifunctional dihydrofolate reductase-thymidylate synthase</fullName>
        <shortName>DHFR-TS</shortName>
    </recommendedName>
    <domain>
        <recommendedName>
            <fullName>Dihydrofolate reductase</fullName>
            <ecNumber>1.5.1.3</ecNumber>
        </recommendedName>
    </domain>
    <domain>
        <recommendedName>
            <fullName>Thymidylate synthase</fullName>
            <ecNumber>2.1.1.45</ecNumber>
        </recommendedName>
    </domain>
</protein>
<dbReference type="EC" id="1.5.1.3"/>
<dbReference type="EC" id="2.1.1.45"/>
<dbReference type="EMBL" id="L22484">
    <property type="protein sequence ID" value="AAB49898.1"/>
    <property type="molecule type" value="Genomic_DNA"/>
</dbReference>
<dbReference type="RefSeq" id="XP_815327.1">
    <property type="nucleotide sequence ID" value="XM_810234.1"/>
</dbReference>
<dbReference type="PDB" id="2H2Q">
    <property type="method" value="X-ray"/>
    <property type="resolution" value="2.40 A"/>
    <property type="chains" value="A/B=1-521"/>
</dbReference>
<dbReference type="PDB" id="3CL9">
    <property type="method" value="X-ray"/>
    <property type="resolution" value="3.30 A"/>
    <property type="chains" value="A=1-521"/>
</dbReference>
<dbReference type="PDB" id="3CLB">
    <property type="method" value="X-ray"/>
    <property type="resolution" value="3.00 A"/>
    <property type="chains" value="A/B/C/D=1-521"/>
</dbReference>
<dbReference type="PDB" id="3HBB">
    <property type="method" value="X-ray"/>
    <property type="resolution" value="3.00 A"/>
    <property type="chains" value="A/B/C/D=1-521"/>
</dbReference>
<dbReference type="PDB" id="3INV">
    <property type="method" value="X-ray"/>
    <property type="resolution" value="2.37 A"/>
    <property type="chains" value="A/B=1-521"/>
</dbReference>
<dbReference type="PDB" id="3IRM">
    <property type="method" value="X-ray"/>
    <property type="resolution" value="2.10 A"/>
    <property type="chains" value="A/B/C/D=1-521"/>
</dbReference>
<dbReference type="PDB" id="3IRN">
    <property type="method" value="X-ray"/>
    <property type="resolution" value="2.60 A"/>
    <property type="chains" value="A/B/C/D=1-521"/>
</dbReference>
<dbReference type="PDB" id="3IRO">
    <property type="method" value="X-ray"/>
    <property type="resolution" value="2.80 A"/>
    <property type="chains" value="A/B/C/D=1-521"/>
</dbReference>
<dbReference type="PDBsum" id="2H2Q"/>
<dbReference type="PDBsum" id="3CL9"/>
<dbReference type="PDBsum" id="3CLB"/>
<dbReference type="PDBsum" id="3HBB"/>
<dbReference type="PDBsum" id="3INV"/>
<dbReference type="PDBsum" id="3IRM"/>
<dbReference type="PDBsum" id="3IRN"/>
<dbReference type="PDBsum" id="3IRO"/>
<dbReference type="SMR" id="Q27793"/>
<dbReference type="BindingDB" id="Q27793"/>
<dbReference type="ChEMBL" id="CHEMBL1163130"/>
<dbReference type="DrugCentral" id="Q27793"/>
<dbReference type="GeneID" id="3547029"/>
<dbReference type="KEGG" id="tcr:509153.90"/>
<dbReference type="VEuPathDB" id="TriTrypDB:BCY84_16439"/>
<dbReference type="VEuPathDB" id="TriTrypDB:C3747_84g65"/>
<dbReference type="VEuPathDB" id="TriTrypDB:C4B63_30g231"/>
<dbReference type="VEuPathDB" id="TriTrypDB:ECC02_006008"/>
<dbReference type="VEuPathDB" id="TriTrypDB:Tc_MARK_668"/>
<dbReference type="VEuPathDB" id="TriTrypDB:TcBrA4_0087940"/>
<dbReference type="VEuPathDB" id="TriTrypDB:TcCL_ESM02245"/>
<dbReference type="VEuPathDB" id="TriTrypDB:TcCLB.420533.9"/>
<dbReference type="VEuPathDB" id="TriTrypDB:TcCLB.509153.90"/>
<dbReference type="VEuPathDB" id="TriTrypDB:TcCLB.510303.320"/>
<dbReference type="VEuPathDB" id="TriTrypDB:TCDM_01885"/>
<dbReference type="VEuPathDB" id="TriTrypDB:TcG_01595"/>
<dbReference type="VEuPathDB" id="TriTrypDB:TCSYLVIO_001858"/>
<dbReference type="VEuPathDB" id="TriTrypDB:TcYC6_0045790"/>
<dbReference type="OMA" id="ENQYLDM"/>
<dbReference type="OrthoDB" id="766at2759"/>
<dbReference type="BRENDA" id="1.5.1.3">
    <property type="organism ID" value="6524"/>
</dbReference>
<dbReference type="BRENDA" id="2.1.1.45">
    <property type="organism ID" value="6524"/>
</dbReference>
<dbReference type="SABIO-RK" id="Q27793"/>
<dbReference type="UniPathway" id="UPA00077">
    <property type="reaction ID" value="UER00158"/>
</dbReference>
<dbReference type="EvolutionaryTrace" id="Q27793"/>
<dbReference type="GO" id="GO:0005829">
    <property type="term" value="C:cytosol"/>
    <property type="evidence" value="ECO:0007669"/>
    <property type="project" value="TreeGrafter"/>
</dbReference>
<dbReference type="GO" id="GO:0005739">
    <property type="term" value="C:mitochondrion"/>
    <property type="evidence" value="ECO:0007669"/>
    <property type="project" value="TreeGrafter"/>
</dbReference>
<dbReference type="GO" id="GO:0004146">
    <property type="term" value="F:dihydrofolate reductase activity"/>
    <property type="evidence" value="ECO:0007669"/>
    <property type="project" value="UniProtKB-EC"/>
</dbReference>
<dbReference type="GO" id="GO:0004799">
    <property type="term" value="F:thymidylate synthase activity"/>
    <property type="evidence" value="ECO:0007669"/>
    <property type="project" value="UniProtKB-EC"/>
</dbReference>
<dbReference type="GO" id="GO:0006231">
    <property type="term" value="P:dTMP biosynthetic process"/>
    <property type="evidence" value="ECO:0007669"/>
    <property type="project" value="InterPro"/>
</dbReference>
<dbReference type="GO" id="GO:0032259">
    <property type="term" value="P:methylation"/>
    <property type="evidence" value="ECO:0007669"/>
    <property type="project" value="UniProtKB-KW"/>
</dbReference>
<dbReference type="GO" id="GO:0006730">
    <property type="term" value="P:one-carbon metabolic process"/>
    <property type="evidence" value="ECO:0007669"/>
    <property type="project" value="UniProtKB-KW"/>
</dbReference>
<dbReference type="GO" id="GO:0046654">
    <property type="term" value="P:tetrahydrofolate biosynthetic process"/>
    <property type="evidence" value="ECO:0007669"/>
    <property type="project" value="UniProtKB-UniPathway"/>
</dbReference>
<dbReference type="CDD" id="cd00209">
    <property type="entry name" value="DHFR"/>
    <property type="match status" value="1"/>
</dbReference>
<dbReference type="CDD" id="cd00351">
    <property type="entry name" value="TS_Pyrimidine_HMase"/>
    <property type="match status" value="1"/>
</dbReference>
<dbReference type="FunFam" id="3.30.572.10:FF:000013">
    <property type="entry name" value="Thymidylate synthase"/>
    <property type="match status" value="1"/>
</dbReference>
<dbReference type="Gene3D" id="3.40.430.10">
    <property type="entry name" value="Dihydrofolate Reductase, subunit A"/>
    <property type="match status" value="1"/>
</dbReference>
<dbReference type="Gene3D" id="3.30.572.10">
    <property type="entry name" value="Thymidylate synthase/dCMP hydroxymethylase domain"/>
    <property type="match status" value="1"/>
</dbReference>
<dbReference type="HAMAP" id="MF_00008">
    <property type="entry name" value="Thymidy_synth_bact"/>
    <property type="match status" value="1"/>
</dbReference>
<dbReference type="InterPro" id="IPR024072">
    <property type="entry name" value="DHFR-like_dom_sf"/>
</dbReference>
<dbReference type="InterPro" id="IPR012262">
    <property type="entry name" value="DHFR-TS"/>
</dbReference>
<dbReference type="InterPro" id="IPR017925">
    <property type="entry name" value="DHFR_CS"/>
</dbReference>
<dbReference type="InterPro" id="IPR001796">
    <property type="entry name" value="DHFR_dom"/>
</dbReference>
<dbReference type="InterPro" id="IPR045097">
    <property type="entry name" value="Thymidate_synth/dCMP_Mease"/>
</dbReference>
<dbReference type="InterPro" id="IPR023451">
    <property type="entry name" value="Thymidate_synth/dCMP_Mease_dom"/>
</dbReference>
<dbReference type="InterPro" id="IPR036926">
    <property type="entry name" value="Thymidate_synth/dCMP_Mease_sf"/>
</dbReference>
<dbReference type="InterPro" id="IPR000398">
    <property type="entry name" value="Thymidylate_synthase"/>
</dbReference>
<dbReference type="InterPro" id="IPR020940">
    <property type="entry name" value="Thymidylate_synthase_AS"/>
</dbReference>
<dbReference type="NCBIfam" id="NF002497">
    <property type="entry name" value="PRK01827.1-3"/>
    <property type="match status" value="1"/>
</dbReference>
<dbReference type="NCBIfam" id="TIGR03284">
    <property type="entry name" value="thym_sym"/>
    <property type="match status" value="1"/>
</dbReference>
<dbReference type="PANTHER" id="PTHR11548:SF2">
    <property type="entry name" value="THYMIDYLATE SYNTHASE"/>
    <property type="match status" value="1"/>
</dbReference>
<dbReference type="PANTHER" id="PTHR11548">
    <property type="entry name" value="THYMIDYLATE SYNTHASE 1"/>
    <property type="match status" value="1"/>
</dbReference>
<dbReference type="Pfam" id="PF00186">
    <property type="entry name" value="DHFR_1"/>
    <property type="match status" value="1"/>
</dbReference>
<dbReference type="Pfam" id="PF00303">
    <property type="entry name" value="Thymidylat_synt"/>
    <property type="match status" value="1"/>
</dbReference>
<dbReference type="PIRSF" id="PIRSF000389">
    <property type="entry name" value="DHFR-TS"/>
    <property type="match status" value="1"/>
</dbReference>
<dbReference type="PRINTS" id="PR00108">
    <property type="entry name" value="THYMDSNTHASE"/>
</dbReference>
<dbReference type="SUPFAM" id="SSF53597">
    <property type="entry name" value="Dihydrofolate reductase-like"/>
    <property type="match status" value="1"/>
</dbReference>
<dbReference type="SUPFAM" id="SSF55831">
    <property type="entry name" value="Thymidylate synthase/dCMP hydroxymethylase"/>
    <property type="match status" value="1"/>
</dbReference>
<dbReference type="PROSITE" id="PS00075">
    <property type="entry name" value="DHFR_1"/>
    <property type="match status" value="1"/>
</dbReference>
<dbReference type="PROSITE" id="PS51330">
    <property type="entry name" value="DHFR_2"/>
    <property type="match status" value="1"/>
</dbReference>
<dbReference type="PROSITE" id="PS00091">
    <property type="entry name" value="THYMIDYLATE_SYNTHASE"/>
    <property type="match status" value="1"/>
</dbReference>
<reference key="1">
    <citation type="journal article" date="1994" name="Mol. Biochem. Parasitol.">
        <title>Cloning and expression of the dihydrofolate reductase-thymidylate synthase gene from Trypanosoma cruzi.</title>
        <authorList>
            <person name="Reche P."/>
            <person name="Arrebola R."/>
            <person name="Olmo A."/>
            <person name="Santi D.V."/>
            <person name="Gonzalez-Pacanowska D."/>
            <person name="Ruiz-Perez L.M."/>
        </authorList>
    </citation>
    <scope>NUCLEOTIDE SEQUENCE [GENOMIC DNA]</scope>
    <source>
        <strain>Y</strain>
    </source>
</reference>
<reference key="2">
    <citation type="journal article" date="1996" name="Mol. Biochem. Parasitol.">
        <title>Expression and characterization of the Trypanosoma cruzi dihydrofolate reductase domain.</title>
        <authorList>
            <person name="Reche P."/>
            <person name="Arrebola R."/>
            <person name="Santi D.V."/>
            <person name="Gonzalez-Pacanowska D."/>
            <person name="Ruiz-Perez L.M."/>
        </authorList>
    </citation>
    <scope>NUCLEOTIDE SEQUENCE [GENOMIC DNA]</scope>
    <source>
        <strain>Y</strain>
    </source>
</reference>
<reference key="3">
    <citation type="journal article" date="2008" name="Proteins">
        <title>Structure-based approach to pharmacophore identification, in silico screening, and three-dimensional quantitative structure-activity relationship studies for inhibitors of Trypanosoma cruzi dihydrofolate reductase function.</title>
        <authorList>
            <person name="Schormann N."/>
            <person name="Senkovich O."/>
            <person name="Walker K."/>
            <person name="Wright D.L."/>
            <person name="Anderson A.C."/>
            <person name="Rosowsky A."/>
            <person name="Ananthan S."/>
            <person name="Shinkre B."/>
            <person name="Velu S."/>
            <person name="Chattopadhyay D."/>
        </authorList>
    </citation>
    <scope>X-RAY CRYSTALLOGRAPHY (2.40 ANGSTROMS) IN COMPLEXES WITH NADP; METHOTREXATE AND TRIMETREXATE</scope>
    <scope>CATALYTIC ACTIVITY</scope>
</reference>
<reference key="4">
    <citation type="journal article" date="2009" name="Acta Crystallogr. D">
        <title>Structures of dihydrofolate reductase-thymidylate synthase of Trypanosoma cruzi in the folate-free state and in complex with two antifolate drugs, trimetrexate and methotrexate.</title>
        <authorList>
            <person name="Senkovich O."/>
            <person name="Schormann N."/>
            <person name="Chattopadhyay D."/>
        </authorList>
    </citation>
    <scope>X-RAY CRYSTALLOGRAPHY (3.00 ANGSTROMS) IN COMPLEXES WITH NADP; UMP; METHOTREXATE AND TRIMETREXATE</scope>
    <scope>SUBUNIT</scope>
</reference>
<reference key="5">
    <citation type="journal article" date="2009" name="Acta Crystallogr. F">
        <title>Crystallization and preliminary crystallographic studies of dihydrofolate reductase-thymidylate synthase from Trypanosoma cruzi, the Chagas disease pathogen.</title>
        <authorList>
            <person name="Chitnumsub P."/>
            <person name="Yuvaniyama J."/>
            <person name="Chahomchuen T."/>
            <person name="Vilaivan T."/>
            <person name="Yuthavong Y."/>
        </authorList>
    </citation>
    <scope>X-RAY CRYSTALLOGRAPHY (2.1 ANGSTROMS) IN COMPLEXES WITH NADP; UMP AND THE SYNTHETIC INHIBITORS C-448; CYC AND Q-8</scope>
    <scope>CATALYTIC ACTIVITY</scope>
</reference>